<sequence length="66" mass="7606">MMIPIRCFTCGSLIADKWQPFITRVNAGENPGKVLDDLGVKRYCCRRMLLSHIDIISEVIHYTRPI</sequence>
<accession>C3NMP6</accession>
<protein>
    <recommendedName>
        <fullName evidence="1">DNA-directed RNA polymerase subunit Rpo10</fullName>
        <ecNumber evidence="1">2.7.7.6</ecNumber>
    </recommendedName>
    <alternativeName>
        <fullName evidence="1">DNA-directed RNA polymerase subunit N</fullName>
    </alternativeName>
</protein>
<dbReference type="EC" id="2.7.7.6" evidence="1"/>
<dbReference type="EMBL" id="CP001404">
    <property type="protein sequence ID" value="ACP47866.1"/>
    <property type="molecule type" value="Genomic_DNA"/>
</dbReference>
<dbReference type="RefSeq" id="WP_012712019.1">
    <property type="nucleotide sequence ID" value="NC_012623.1"/>
</dbReference>
<dbReference type="SMR" id="C3NMP6"/>
<dbReference type="KEGG" id="sin:YN1551_0741"/>
<dbReference type="HOGENOM" id="CLU_143122_1_1_2"/>
<dbReference type="Proteomes" id="UP000006818">
    <property type="component" value="Chromosome"/>
</dbReference>
<dbReference type="GO" id="GO:0005737">
    <property type="term" value="C:cytoplasm"/>
    <property type="evidence" value="ECO:0007669"/>
    <property type="project" value="UniProtKB-SubCell"/>
</dbReference>
<dbReference type="GO" id="GO:0000428">
    <property type="term" value="C:DNA-directed RNA polymerase complex"/>
    <property type="evidence" value="ECO:0007669"/>
    <property type="project" value="UniProtKB-KW"/>
</dbReference>
<dbReference type="GO" id="GO:0003677">
    <property type="term" value="F:DNA binding"/>
    <property type="evidence" value="ECO:0007669"/>
    <property type="project" value="InterPro"/>
</dbReference>
<dbReference type="GO" id="GO:0003899">
    <property type="term" value="F:DNA-directed RNA polymerase activity"/>
    <property type="evidence" value="ECO:0007669"/>
    <property type="project" value="UniProtKB-UniRule"/>
</dbReference>
<dbReference type="GO" id="GO:0008270">
    <property type="term" value="F:zinc ion binding"/>
    <property type="evidence" value="ECO:0007669"/>
    <property type="project" value="UniProtKB-UniRule"/>
</dbReference>
<dbReference type="GO" id="GO:0006351">
    <property type="term" value="P:DNA-templated transcription"/>
    <property type="evidence" value="ECO:0007669"/>
    <property type="project" value="UniProtKB-UniRule"/>
</dbReference>
<dbReference type="FunFam" id="1.10.10.60:FF:000335">
    <property type="entry name" value="DNA-directed RNA polymerase subunit N, putative"/>
    <property type="match status" value="1"/>
</dbReference>
<dbReference type="Gene3D" id="1.10.10.60">
    <property type="entry name" value="Homeodomain-like"/>
    <property type="match status" value="1"/>
</dbReference>
<dbReference type="HAMAP" id="MF_00250">
    <property type="entry name" value="RNApol_arch_Rpo10"/>
    <property type="match status" value="1"/>
</dbReference>
<dbReference type="InterPro" id="IPR023580">
    <property type="entry name" value="RNA_pol_su_RPB10"/>
</dbReference>
<dbReference type="InterPro" id="IPR020789">
    <property type="entry name" value="RNA_pol_suN_Zn-BS"/>
</dbReference>
<dbReference type="InterPro" id="IPR000268">
    <property type="entry name" value="RPABC5/Rpb10"/>
</dbReference>
<dbReference type="NCBIfam" id="NF003089">
    <property type="entry name" value="PRK04016.1"/>
    <property type="match status" value="1"/>
</dbReference>
<dbReference type="PANTHER" id="PTHR23431:SF3">
    <property type="entry name" value="DNA-DIRECTED RNA POLYMERASES I, II, AND III SUBUNIT RPABC5"/>
    <property type="match status" value="1"/>
</dbReference>
<dbReference type="PANTHER" id="PTHR23431">
    <property type="entry name" value="DNA-DIRECTED RNA POLYMERASES I, II, AND III SUBUNIT RPABC5 FAMILY MEMBER"/>
    <property type="match status" value="1"/>
</dbReference>
<dbReference type="Pfam" id="PF01194">
    <property type="entry name" value="RNA_pol_N"/>
    <property type="match status" value="1"/>
</dbReference>
<dbReference type="PIRSF" id="PIRSF005653">
    <property type="entry name" value="RNA_pol_N/8_sub"/>
    <property type="match status" value="1"/>
</dbReference>
<dbReference type="SUPFAM" id="SSF46924">
    <property type="entry name" value="RNA polymerase subunit RPB10"/>
    <property type="match status" value="1"/>
</dbReference>
<dbReference type="PROSITE" id="PS01112">
    <property type="entry name" value="RNA_POL_N_8KD"/>
    <property type="match status" value="1"/>
</dbReference>
<comment type="function">
    <text evidence="1">DNA-dependent RNA polymerase (RNAP) catalyzes the transcription of DNA into RNA using the four ribonucleoside triphosphates as substrates.</text>
</comment>
<comment type="catalytic activity">
    <reaction evidence="1">
        <text>RNA(n) + a ribonucleoside 5'-triphosphate = RNA(n+1) + diphosphate</text>
        <dbReference type="Rhea" id="RHEA:21248"/>
        <dbReference type="Rhea" id="RHEA-COMP:14527"/>
        <dbReference type="Rhea" id="RHEA-COMP:17342"/>
        <dbReference type="ChEBI" id="CHEBI:33019"/>
        <dbReference type="ChEBI" id="CHEBI:61557"/>
        <dbReference type="ChEBI" id="CHEBI:140395"/>
        <dbReference type="EC" id="2.7.7.6"/>
    </reaction>
</comment>
<comment type="cofactor">
    <cofactor evidence="1">
        <name>Zn(2+)</name>
        <dbReference type="ChEBI" id="CHEBI:29105"/>
    </cofactor>
    <text evidence="1">Binds 1 zinc ion.</text>
</comment>
<comment type="subunit">
    <text evidence="1">Part of the RNA polymerase complex.</text>
</comment>
<comment type="subcellular location">
    <subcellularLocation>
        <location evidence="1">Cytoplasm</location>
    </subcellularLocation>
</comment>
<comment type="similarity">
    <text evidence="1">Belongs to the archaeal Rpo10/eukaryotic RPB10 RNA polymerase subunit family.</text>
</comment>
<gene>
    <name evidence="1" type="primary">rpo10</name>
    <name evidence="1" type="synonym">rpoN</name>
    <name type="ordered locus">YN1551_0741</name>
</gene>
<name>RPO10_SACI1</name>
<feature type="chain" id="PRO_1000204538" description="DNA-directed RNA polymerase subunit Rpo10">
    <location>
        <begin position="1"/>
        <end position="66"/>
    </location>
</feature>
<feature type="binding site" evidence="1">
    <location>
        <position position="7"/>
    </location>
    <ligand>
        <name>Zn(2+)</name>
        <dbReference type="ChEBI" id="CHEBI:29105"/>
    </ligand>
</feature>
<feature type="binding site" evidence="1">
    <location>
        <position position="10"/>
    </location>
    <ligand>
        <name>Zn(2+)</name>
        <dbReference type="ChEBI" id="CHEBI:29105"/>
    </ligand>
</feature>
<feature type="binding site" evidence="1">
    <location>
        <position position="44"/>
    </location>
    <ligand>
        <name>Zn(2+)</name>
        <dbReference type="ChEBI" id="CHEBI:29105"/>
    </ligand>
</feature>
<feature type="binding site" evidence="1">
    <location>
        <position position="45"/>
    </location>
    <ligand>
        <name>Zn(2+)</name>
        <dbReference type="ChEBI" id="CHEBI:29105"/>
    </ligand>
</feature>
<keyword id="KW-0963">Cytoplasm</keyword>
<keyword id="KW-0240">DNA-directed RNA polymerase</keyword>
<keyword id="KW-0479">Metal-binding</keyword>
<keyword id="KW-0548">Nucleotidyltransferase</keyword>
<keyword id="KW-0804">Transcription</keyword>
<keyword id="KW-0808">Transferase</keyword>
<keyword id="KW-0862">Zinc</keyword>
<organism>
    <name type="scientific">Saccharolobus islandicus (strain Y.N.15.51 / Yellowstone #2)</name>
    <name type="common">Sulfolobus islandicus</name>
    <dbReference type="NCBI Taxonomy" id="419942"/>
    <lineage>
        <taxon>Archaea</taxon>
        <taxon>Thermoproteota</taxon>
        <taxon>Thermoprotei</taxon>
        <taxon>Sulfolobales</taxon>
        <taxon>Sulfolobaceae</taxon>
        <taxon>Saccharolobus</taxon>
    </lineage>
</organism>
<reference key="1">
    <citation type="journal article" date="2009" name="Proc. Natl. Acad. Sci. U.S.A.">
        <title>Biogeography of the Sulfolobus islandicus pan-genome.</title>
        <authorList>
            <person name="Reno M.L."/>
            <person name="Held N.L."/>
            <person name="Fields C.J."/>
            <person name="Burke P.V."/>
            <person name="Whitaker R.J."/>
        </authorList>
    </citation>
    <scope>NUCLEOTIDE SEQUENCE [LARGE SCALE GENOMIC DNA]</scope>
    <source>
        <strain>Y.N.15.51 / Yellowstone #2</strain>
    </source>
</reference>
<evidence type="ECO:0000255" key="1">
    <source>
        <dbReference type="HAMAP-Rule" id="MF_00250"/>
    </source>
</evidence>
<proteinExistence type="inferred from homology"/>